<dbReference type="EC" id="2.4.1.207"/>
<dbReference type="EMBL" id="U43488">
    <property type="protein sequence ID" value="AAB18367.1"/>
    <property type="molecule type" value="mRNA"/>
</dbReference>
<dbReference type="EMBL" id="AL049480">
    <property type="protein sequence ID" value="CAB39602.1"/>
    <property type="molecule type" value="Genomic_DNA"/>
</dbReference>
<dbReference type="EMBL" id="AL161564">
    <property type="protein sequence ID" value="CAB79436.1"/>
    <property type="molecule type" value="Genomic_DNA"/>
</dbReference>
<dbReference type="EMBL" id="CP002687">
    <property type="protein sequence ID" value="AEE85117.1"/>
    <property type="molecule type" value="Genomic_DNA"/>
</dbReference>
<dbReference type="EMBL" id="AY062472">
    <property type="protein sequence ID" value="AAL32550.1"/>
    <property type="molecule type" value="mRNA"/>
</dbReference>
<dbReference type="EMBL" id="AY093252">
    <property type="protein sequence ID" value="AAM13251.1"/>
    <property type="molecule type" value="mRNA"/>
</dbReference>
<dbReference type="PIR" id="S71225">
    <property type="entry name" value="S71225"/>
</dbReference>
<dbReference type="RefSeq" id="NP_194311.1">
    <property type="nucleotide sequence ID" value="NM_118713.5"/>
</dbReference>
<dbReference type="SMR" id="Q38910"/>
<dbReference type="FunCoup" id="Q38910">
    <property type="interactions" value="39"/>
</dbReference>
<dbReference type="STRING" id="3702.Q38910"/>
<dbReference type="CAZy" id="GH16">
    <property type="family name" value="Glycoside Hydrolase Family 16"/>
</dbReference>
<dbReference type="GlyCosmos" id="Q38910">
    <property type="glycosylation" value="2 sites, No reported glycans"/>
</dbReference>
<dbReference type="GlyGen" id="Q38910">
    <property type="glycosylation" value="2 sites"/>
</dbReference>
<dbReference type="PaxDb" id="3702-AT4G25810.1"/>
<dbReference type="ProteomicsDB" id="242378"/>
<dbReference type="EnsemblPlants" id="AT4G25810.1">
    <property type="protein sequence ID" value="AT4G25810.1"/>
    <property type="gene ID" value="AT4G25810"/>
</dbReference>
<dbReference type="GeneID" id="828686"/>
<dbReference type="Gramene" id="AT4G25810.1">
    <property type="protein sequence ID" value="AT4G25810.1"/>
    <property type="gene ID" value="AT4G25810"/>
</dbReference>
<dbReference type="KEGG" id="ath:AT4G25810"/>
<dbReference type="Araport" id="AT4G25810"/>
<dbReference type="TAIR" id="AT4G25810">
    <property type="gene designation" value="XTR6"/>
</dbReference>
<dbReference type="eggNOG" id="ENOG502QQ71">
    <property type="taxonomic scope" value="Eukaryota"/>
</dbReference>
<dbReference type="HOGENOM" id="CLU_048041_0_0_1"/>
<dbReference type="InParanoid" id="Q38910"/>
<dbReference type="OMA" id="VFISWIE"/>
<dbReference type="PhylomeDB" id="Q38910"/>
<dbReference type="BioCyc" id="ARA:AT4G25810-MONOMER"/>
<dbReference type="PRO" id="PR:Q38910"/>
<dbReference type="Proteomes" id="UP000006548">
    <property type="component" value="Chromosome 4"/>
</dbReference>
<dbReference type="ExpressionAtlas" id="Q38910">
    <property type="expression patterns" value="baseline and differential"/>
</dbReference>
<dbReference type="GO" id="GO:0048046">
    <property type="term" value="C:apoplast"/>
    <property type="evidence" value="ECO:0007669"/>
    <property type="project" value="UniProtKB-SubCell"/>
</dbReference>
<dbReference type="GO" id="GO:0005794">
    <property type="term" value="C:Golgi apparatus"/>
    <property type="evidence" value="ECO:0007005"/>
    <property type="project" value="TAIR"/>
</dbReference>
<dbReference type="GO" id="GO:0004553">
    <property type="term" value="F:hydrolase activity, hydrolyzing O-glycosyl compounds"/>
    <property type="evidence" value="ECO:0007669"/>
    <property type="project" value="InterPro"/>
</dbReference>
<dbReference type="GO" id="GO:0030247">
    <property type="term" value="F:polysaccharide binding"/>
    <property type="evidence" value="ECO:0000250"/>
    <property type="project" value="UniProtKB"/>
</dbReference>
<dbReference type="GO" id="GO:0016762">
    <property type="term" value="F:xyloglucan:xyloglucosyl transferase activity"/>
    <property type="evidence" value="ECO:0007669"/>
    <property type="project" value="UniProtKB-EC"/>
</dbReference>
<dbReference type="GO" id="GO:0042546">
    <property type="term" value="P:cell wall biogenesis"/>
    <property type="evidence" value="ECO:0007669"/>
    <property type="project" value="InterPro"/>
</dbReference>
<dbReference type="GO" id="GO:0071555">
    <property type="term" value="P:cell wall organization"/>
    <property type="evidence" value="ECO:0007669"/>
    <property type="project" value="UniProtKB-KW"/>
</dbReference>
<dbReference type="GO" id="GO:0010411">
    <property type="term" value="P:xyloglucan metabolic process"/>
    <property type="evidence" value="ECO:0007669"/>
    <property type="project" value="InterPro"/>
</dbReference>
<dbReference type="CDD" id="cd02176">
    <property type="entry name" value="GH16_XET"/>
    <property type="match status" value="1"/>
</dbReference>
<dbReference type="FunFam" id="2.60.120.200:FF:000025">
    <property type="entry name" value="Xyloglucan endotransglucosylase/hydrolase"/>
    <property type="match status" value="1"/>
</dbReference>
<dbReference type="Gene3D" id="2.60.120.200">
    <property type="match status" value="1"/>
</dbReference>
<dbReference type="InterPro" id="IPR044791">
    <property type="entry name" value="Beta-glucanase/XTH"/>
</dbReference>
<dbReference type="InterPro" id="IPR013320">
    <property type="entry name" value="ConA-like_dom_sf"/>
</dbReference>
<dbReference type="InterPro" id="IPR000757">
    <property type="entry name" value="GH16"/>
</dbReference>
<dbReference type="InterPro" id="IPR008263">
    <property type="entry name" value="GH16_AS"/>
</dbReference>
<dbReference type="InterPro" id="IPR010713">
    <property type="entry name" value="XET_C"/>
</dbReference>
<dbReference type="InterPro" id="IPR016455">
    <property type="entry name" value="XTH"/>
</dbReference>
<dbReference type="PANTHER" id="PTHR31062">
    <property type="entry name" value="XYLOGLUCAN ENDOTRANSGLUCOSYLASE/HYDROLASE PROTEIN 8-RELATED"/>
    <property type="match status" value="1"/>
</dbReference>
<dbReference type="Pfam" id="PF00722">
    <property type="entry name" value="Glyco_hydro_16"/>
    <property type="match status" value="1"/>
</dbReference>
<dbReference type="Pfam" id="PF06955">
    <property type="entry name" value="XET_C"/>
    <property type="match status" value="1"/>
</dbReference>
<dbReference type="PIRSF" id="PIRSF005604">
    <property type="entry name" value="XET"/>
    <property type="match status" value="1"/>
</dbReference>
<dbReference type="SUPFAM" id="SSF49899">
    <property type="entry name" value="Concanavalin A-like lectins/glucanases"/>
    <property type="match status" value="1"/>
</dbReference>
<dbReference type="PROSITE" id="PS01034">
    <property type="entry name" value="GH16_1"/>
    <property type="match status" value="1"/>
</dbReference>
<dbReference type="PROSITE" id="PS51762">
    <property type="entry name" value="GH16_2"/>
    <property type="match status" value="1"/>
</dbReference>
<protein>
    <recommendedName>
        <fullName>Probable xyloglucan endotransglucosylase/hydrolase protein 23</fullName>
        <shortName>At-XTH23</shortName>
        <shortName>XTH-23</shortName>
        <ecNumber>2.4.1.207</ecNumber>
    </recommendedName>
</protein>
<name>XTH23_ARATH</name>
<comment type="function">
    <text evidence="1">Catalyzes xyloglucan endohydrolysis (XEH) and/or endotransglycosylation (XET). Cleaves and religates xyloglucan polymers, an essential constituent of the primary cell wall, and thereby participates in cell wall construction of growing tissues (By similarity).</text>
</comment>
<comment type="catalytic activity">
    <reaction>
        <text>breaks a beta-(1-&gt;4) bond in the backbone of a xyloglucan and transfers the xyloglucanyl segment on to O-4 of the non-reducing terminal glucose residue of an acceptor, which can be a xyloglucan or an oligosaccharide of xyloglucan.</text>
        <dbReference type="EC" id="2.4.1.207"/>
    </reaction>
</comment>
<comment type="subcellular location">
    <subcellularLocation>
        <location evidence="7">Secreted</location>
        <location evidence="7">Cell wall</location>
    </subcellularLocation>
    <subcellularLocation>
        <location evidence="7">Secreted</location>
        <location evidence="7">Extracellular space</location>
        <location evidence="7">Apoplast</location>
    </subcellularLocation>
</comment>
<comment type="induction">
    <text evidence="6">By auxin and brassinolide. Up-regulated by abscisic acid (ABA).</text>
</comment>
<comment type="PTM">
    <text evidence="1">Contains at least one intrachain disulfide bond essential for its enzymatic activity.</text>
</comment>
<comment type="similarity">
    <text evidence="7">Belongs to the glycosyl hydrolase 16 family. XTH group 2 subfamily.</text>
</comment>
<organism>
    <name type="scientific">Arabidopsis thaliana</name>
    <name type="common">Mouse-ear cress</name>
    <dbReference type="NCBI Taxonomy" id="3702"/>
    <lineage>
        <taxon>Eukaryota</taxon>
        <taxon>Viridiplantae</taxon>
        <taxon>Streptophyta</taxon>
        <taxon>Embryophyta</taxon>
        <taxon>Tracheophyta</taxon>
        <taxon>Spermatophyta</taxon>
        <taxon>Magnoliopsida</taxon>
        <taxon>eudicotyledons</taxon>
        <taxon>Gunneridae</taxon>
        <taxon>Pentapetalae</taxon>
        <taxon>rosids</taxon>
        <taxon>malvids</taxon>
        <taxon>Brassicales</taxon>
        <taxon>Brassicaceae</taxon>
        <taxon>Camelineae</taxon>
        <taxon>Arabidopsis</taxon>
    </lineage>
</organism>
<reference key="1">
    <citation type="journal article" date="1996" name="Plant J.">
        <title>The Arabidopsis XET-related gene family: environmental and hormonal regulation of expression.</title>
        <authorList>
            <person name="Xu W."/>
            <person name="Campbell P."/>
            <person name="Vargheese A.K."/>
            <person name="Braam J."/>
        </authorList>
    </citation>
    <scope>NUCLEOTIDE SEQUENCE [MRNA]</scope>
    <source>
        <strain>cv. Columbia</strain>
    </source>
</reference>
<reference key="2">
    <citation type="journal article" date="1999" name="Nature">
        <title>Sequence and analysis of chromosome 4 of the plant Arabidopsis thaliana.</title>
        <authorList>
            <person name="Mayer K.F.X."/>
            <person name="Schueller C."/>
            <person name="Wambutt R."/>
            <person name="Murphy G."/>
            <person name="Volckaert G."/>
            <person name="Pohl T."/>
            <person name="Duesterhoeft A."/>
            <person name="Stiekema W."/>
            <person name="Entian K.-D."/>
            <person name="Terryn N."/>
            <person name="Harris B."/>
            <person name="Ansorge W."/>
            <person name="Brandt P."/>
            <person name="Grivell L.A."/>
            <person name="Rieger M."/>
            <person name="Weichselgartner M."/>
            <person name="de Simone V."/>
            <person name="Obermaier B."/>
            <person name="Mache R."/>
            <person name="Mueller M."/>
            <person name="Kreis M."/>
            <person name="Delseny M."/>
            <person name="Puigdomenech P."/>
            <person name="Watson M."/>
            <person name="Schmidtheini T."/>
            <person name="Reichert B."/>
            <person name="Portetelle D."/>
            <person name="Perez-Alonso M."/>
            <person name="Boutry M."/>
            <person name="Bancroft I."/>
            <person name="Vos P."/>
            <person name="Hoheisel J."/>
            <person name="Zimmermann W."/>
            <person name="Wedler H."/>
            <person name="Ridley P."/>
            <person name="Langham S.-A."/>
            <person name="McCullagh B."/>
            <person name="Bilham L."/>
            <person name="Robben J."/>
            <person name="van der Schueren J."/>
            <person name="Grymonprez B."/>
            <person name="Chuang Y.-J."/>
            <person name="Vandenbussche F."/>
            <person name="Braeken M."/>
            <person name="Weltjens I."/>
            <person name="Voet M."/>
            <person name="Bastiaens I."/>
            <person name="Aert R."/>
            <person name="Defoor E."/>
            <person name="Weitzenegger T."/>
            <person name="Bothe G."/>
            <person name="Ramsperger U."/>
            <person name="Hilbert H."/>
            <person name="Braun M."/>
            <person name="Holzer E."/>
            <person name="Brandt A."/>
            <person name="Peters S."/>
            <person name="van Staveren M."/>
            <person name="Dirkse W."/>
            <person name="Mooijman P."/>
            <person name="Klein Lankhorst R."/>
            <person name="Rose M."/>
            <person name="Hauf J."/>
            <person name="Koetter P."/>
            <person name="Berneiser S."/>
            <person name="Hempel S."/>
            <person name="Feldpausch M."/>
            <person name="Lamberth S."/>
            <person name="Van den Daele H."/>
            <person name="De Keyser A."/>
            <person name="Buysshaert C."/>
            <person name="Gielen J."/>
            <person name="Villarroel R."/>
            <person name="De Clercq R."/>
            <person name="van Montagu M."/>
            <person name="Rogers J."/>
            <person name="Cronin A."/>
            <person name="Quail M.A."/>
            <person name="Bray-Allen S."/>
            <person name="Clark L."/>
            <person name="Doggett J."/>
            <person name="Hall S."/>
            <person name="Kay M."/>
            <person name="Lennard N."/>
            <person name="McLay K."/>
            <person name="Mayes R."/>
            <person name="Pettett A."/>
            <person name="Rajandream M.A."/>
            <person name="Lyne M."/>
            <person name="Benes V."/>
            <person name="Rechmann S."/>
            <person name="Borkova D."/>
            <person name="Bloecker H."/>
            <person name="Scharfe M."/>
            <person name="Grimm M."/>
            <person name="Loehnert T.-H."/>
            <person name="Dose S."/>
            <person name="de Haan M."/>
            <person name="Maarse A.C."/>
            <person name="Schaefer M."/>
            <person name="Mueller-Auer S."/>
            <person name="Gabel C."/>
            <person name="Fuchs M."/>
            <person name="Fartmann B."/>
            <person name="Granderath K."/>
            <person name="Dauner D."/>
            <person name="Herzl A."/>
            <person name="Neumann S."/>
            <person name="Argiriou A."/>
            <person name="Vitale D."/>
            <person name="Liguori R."/>
            <person name="Piravandi E."/>
            <person name="Massenet O."/>
            <person name="Quigley F."/>
            <person name="Clabauld G."/>
            <person name="Muendlein A."/>
            <person name="Felber R."/>
            <person name="Schnabl S."/>
            <person name="Hiller R."/>
            <person name="Schmidt W."/>
            <person name="Lecharny A."/>
            <person name="Aubourg S."/>
            <person name="Chefdor F."/>
            <person name="Cooke R."/>
            <person name="Berger C."/>
            <person name="Monfort A."/>
            <person name="Casacuberta E."/>
            <person name="Gibbons T."/>
            <person name="Weber N."/>
            <person name="Vandenbol M."/>
            <person name="Bargues M."/>
            <person name="Terol J."/>
            <person name="Torres A."/>
            <person name="Perez-Perez A."/>
            <person name="Purnelle B."/>
            <person name="Bent E."/>
            <person name="Johnson S."/>
            <person name="Tacon D."/>
            <person name="Jesse T."/>
            <person name="Heijnen L."/>
            <person name="Schwarz S."/>
            <person name="Scholler P."/>
            <person name="Heber S."/>
            <person name="Francs P."/>
            <person name="Bielke C."/>
            <person name="Frishman D."/>
            <person name="Haase D."/>
            <person name="Lemcke K."/>
            <person name="Mewes H.-W."/>
            <person name="Stocker S."/>
            <person name="Zaccaria P."/>
            <person name="Bevan M."/>
            <person name="Wilson R.K."/>
            <person name="de la Bastide M."/>
            <person name="Habermann K."/>
            <person name="Parnell L."/>
            <person name="Dedhia N."/>
            <person name="Gnoj L."/>
            <person name="Schutz K."/>
            <person name="Huang E."/>
            <person name="Spiegel L."/>
            <person name="Sekhon M."/>
            <person name="Murray J."/>
            <person name="Sheet P."/>
            <person name="Cordes M."/>
            <person name="Abu-Threideh J."/>
            <person name="Stoneking T."/>
            <person name="Kalicki J."/>
            <person name="Graves T."/>
            <person name="Harmon G."/>
            <person name="Edwards J."/>
            <person name="Latreille P."/>
            <person name="Courtney L."/>
            <person name="Cloud J."/>
            <person name="Abbott A."/>
            <person name="Scott K."/>
            <person name="Johnson D."/>
            <person name="Minx P."/>
            <person name="Bentley D."/>
            <person name="Fulton B."/>
            <person name="Miller N."/>
            <person name="Greco T."/>
            <person name="Kemp K."/>
            <person name="Kramer J."/>
            <person name="Fulton L."/>
            <person name="Mardis E."/>
            <person name="Dante M."/>
            <person name="Pepin K."/>
            <person name="Hillier L.W."/>
            <person name="Nelson J."/>
            <person name="Spieth J."/>
            <person name="Ryan E."/>
            <person name="Andrews S."/>
            <person name="Geisel C."/>
            <person name="Layman D."/>
            <person name="Du H."/>
            <person name="Ali J."/>
            <person name="Berghoff A."/>
            <person name="Jones K."/>
            <person name="Drone K."/>
            <person name="Cotton M."/>
            <person name="Joshu C."/>
            <person name="Antonoiu B."/>
            <person name="Zidanic M."/>
            <person name="Strong C."/>
            <person name="Sun H."/>
            <person name="Lamar B."/>
            <person name="Yordan C."/>
            <person name="Ma P."/>
            <person name="Zhong J."/>
            <person name="Preston R."/>
            <person name="Vil D."/>
            <person name="Shekher M."/>
            <person name="Matero A."/>
            <person name="Shah R."/>
            <person name="Swaby I.K."/>
            <person name="O'Shaughnessy A."/>
            <person name="Rodriguez M."/>
            <person name="Hoffman J."/>
            <person name="Till S."/>
            <person name="Granat S."/>
            <person name="Shohdy N."/>
            <person name="Hasegawa A."/>
            <person name="Hameed A."/>
            <person name="Lodhi M."/>
            <person name="Johnson A."/>
            <person name="Chen E."/>
            <person name="Marra M.A."/>
            <person name="Martienssen R."/>
            <person name="McCombie W.R."/>
        </authorList>
    </citation>
    <scope>NUCLEOTIDE SEQUENCE [LARGE SCALE GENOMIC DNA]</scope>
    <source>
        <strain>cv. Columbia</strain>
    </source>
</reference>
<reference key="3">
    <citation type="journal article" date="2017" name="Plant J.">
        <title>Araport11: a complete reannotation of the Arabidopsis thaliana reference genome.</title>
        <authorList>
            <person name="Cheng C.Y."/>
            <person name="Krishnakumar V."/>
            <person name="Chan A.P."/>
            <person name="Thibaud-Nissen F."/>
            <person name="Schobel S."/>
            <person name="Town C.D."/>
        </authorList>
    </citation>
    <scope>GENOME REANNOTATION</scope>
    <source>
        <strain>cv. Columbia</strain>
    </source>
</reference>
<reference key="4">
    <citation type="journal article" date="2003" name="Science">
        <title>Empirical analysis of transcriptional activity in the Arabidopsis genome.</title>
        <authorList>
            <person name="Yamada K."/>
            <person name="Lim J."/>
            <person name="Dale J.M."/>
            <person name="Chen H."/>
            <person name="Shinn P."/>
            <person name="Palm C.J."/>
            <person name="Southwick A.M."/>
            <person name="Wu H.C."/>
            <person name="Kim C.J."/>
            <person name="Nguyen M."/>
            <person name="Pham P.K."/>
            <person name="Cheuk R.F."/>
            <person name="Karlin-Newmann G."/>
            <person name="Liu S.X."/>
            <person name="Lam B."/>
            <person name="Sakano H."/>
            <person name="Wu T."/>
            <person name="Yu G."/>
            <person name="Miranda M."/>
            <person name="Quach H.L."/>
            <person name="Tripp M."/>
            <person name="Chang C.H."/>
            <person name="Lee J.M."/>
            <person name="Toriumi M.J."/>
            <person name="Chan M.M."/>
            <person name="Tang C.C."/>
            <person name="Onodera C.S."/>
            <person name="Deng J.M."/>
            <person name="Akiyama K."/>
            <person name="Ansari Y."/>
            <person name="Arakawa T."/>
            <person name="Banh J."/>
            <person name="Banno F."/>
            <person name="Bowser L."/>
            <person name="Brooks S.Y."/>
            <person name="Carninci P."/>
            <person name="Chao Q."/>
            <person name="Choy N."/>
            <person name="Enju A."/>
            <person name="Goldsmith A.D."/>
            <person name="Gurjal M."/>
            <person name="Hansen N.F."/>
            <person name="Hayashizaki Y."/>
            <person name="Johnson-Hopson C."/>
            <person name="Hsuan V.W."/>
            <person name="Iida K."/>
            <person name="Karnes M."/>
            <person name="Khan S."/>
            <person name="Koesema E."/>
            <person name="Ishida J."/>
            <person name="Jiang P.X."/>
            <person name="Jones T."/>
            <person name="Kawai J."/>
            <person name="Kamiya A."/>
            <person name="Meyers C."/>
            <person name="Nakajima M."/>
            <person name="Narusaka M."/>
            <person name="Seki M."/>
            <person name="Sakurai T."/>
            <person name="Satou M."/>
            <person name="Tamse R."/>
            <person name="Vaysberg M."/>
            <person name="Wallender E.K."/>
            <person name="Wong C."/>
            <person name="Yamamura Y."/>
            <person name="Yuan S."/>
            <person name="Shinozaki K."/>
            <person name="Davis R.W."/>
            <person name="Theologis A."/>
            <person name="Ecker J.R."/>
        </authorList>
    </citation>
    <scope>NUCLEOTIDE SEQUENCE [LARGE SCALE MRNA]</scope>
    <source>
        <strain>cv. Columbia</strain>
    </source>
</reference>
<reference key="5">
    <citation type="journal article" date="2001" name="Plant Cell Physiol.">
        <title>A comprehensive expression analysis of all members of a gene family encoding cell-wall enzymes allowed us to predict cis-regulatory regions involved in cell-wall construction in specific organs of Arabidopsis.</title>
        <authorList>
            <person name="Yokoyama R."/>
            <person name="Nishitani K."/>
        </authorList>
    </citation>
    <scope>INDUCTION</scope>
</reference>
<reference key="6">
    <citation type="journal article" date="2002" name="Plant Cell Physiol.">
        <title>The XTH family of enzymes involved in xyloglucan endotransglucosylation and endohydrolysis: current perspectives and a new unifying nomenclature.</title>
        <authorList>
            <person name="Rose J.K.C."/>
            <person name="Braam J."/>
            <person name="Fry S.C."/>
            <person name="Nishitani K."/>
        </authorList>
    </citation>
    <scope>NOMENCLATURE</scope>
</reference>
<proteinExistence type="evidence at transcript level"/>
<accession>Q38910</accession>
<accession>Q8W4M6</accession>
<gene>
    <name type="primary">XTH23</name>
    <name type="synonym">XTR6</name>
    <name type="ordered locus">At4g25810</name>
    <name type="ORF">F14M19.90</name>
</gene>
<keyword id="KW-0052">Apoplast</keyword>
<keyword id="KW-0134">Cell wall</keyword>
<keyword id="KW-0961">Cell wall biogenesis/degradation</keyword>
<keyword id="KW-1015">Disulfide bond</keyword>
<keyword id="KW-0325">Glycoprotein</keyword>
<keyword id="KW-0326">Glycosidase</keyword>
<keyword id="KW-0378">Hydrolase</keyword>
<keyword id="KW-1185">Reference proteome</keyword>
<keyword id="KW-0964">Secreted</keyword>
<keyword id="KW-0732">Signal</keyword>
<keyword id="KW-0808">Transferase</keyword>
<evidence type="ECO:0000250" key="1"/>
<evidence type="ECO:0000250" key="2">
    <source>
        <dbReference type="UniProtKB" id="Q8GZD5"/>
    </source>
</evidence>
<evidence type="ECO:0000255" key="3"/>
<evidence type="ECO:0000255" key="4">
    <source>
        <dbReference type="PROSITE-ProRule" id="PRU01098"/>
    </source>
</evidence>
<evidence type="ECO:0000255" key="5">
    <source>
        <dbReference type="PROSITE-ProRule" id="PRU10064"/>
    </source>
</evidence>
<evidence type="ECO:0000269" key="6">
    <source>
    </source>
</evidence>
<evidence type="ECO:0000305" key="7"/>
<sequence length="286" mass="32064">MAMISYSTIVVALLASFMICSVSANFQRDVEITWGDGRGQITNNGDLLTLSLDKASGSGFQSKNEYLFGKIDMQIKLVAGNSAGTVTAYYLKSPGSTWDEIDFEFLGNLSGDPYTLHTNVFTQGKGDREQQFKLWFDPTSDFHTYSILWNPQRIIFSVDGTPIREFKNMESQGTLFPKNQPMRMYSSLWNAEEWATRGGLVKTDWSKAPFTASYRGFNEEACVVINGQSSCPNVSGQGSTGSWLSQELDSTGQEQMRWVQNNYMIYNYCTDAKRFPQGLPRECLAA</sequence>
<feature type="signal peptide" evidence="3">
    <location>
        <begin position="1"/>
        <end position="24"/>
    </location>
</feature>
<feature type="chain" id="PRO_0000011823" description="Probable xyloglucan endotransglucosylase/hydrolase protein 23">
    <location>
        <begin position="25"/>
        <end position="286"/>
    </location>
</feature>
<feature type="domain" description="GH16" evidence="4">
    <location>
        <begin position="25"/>
        <end position="214"/>
    </location>
</feature>
<feature type="active site" description="Nucleophile" evidence="5">
    <location>
        <position position="100"/>
    </location>
</feature>
<feature type="active site" description="Proton donor" evidence="5">
    <location>
        <position position="104"/>
    </location>
</feature>
<feature type="binding site" evidence="2">
    <location>
        <position position="104"/>
    </location>
    <ligand>
        <name>xyloglucan</name>
        <dbReference type="ChEBI" id="CHEBI:18233"/>
    </ligand>
</feature>
<feature type="binding site" evidence="2">
    <location>
        <begin position="117"/>
        <end position="119"/>
    </location>
    <ligand>
        <name>xyloglucan</name>
        <dbReference type="ChEBI" id="CHEBI:18233"/>
    </ligand>
</feature>
<feature type="binding site" evidence="2">
    <location>
        <begin position="127"/>
        <end position="129"/>
    </location>
    <ligand>
        <name>xyloglucan</name>
        <dbReference type="ChEBI" id="CHEBI:18233"/>
    </ligand>
</feature>
<feature type="binding site" evidence="2">
    <location>
        <begin position="193"/>
        <end position="194"/>
    </location>
    <ligand>
        <name>xyloglucan</name>
        <dbReference type="ChEBI" id="CHEBI:18233"/>
    </ligand>
</feature>
<feature type="binding site" evidence="2">
    <location>
        <position position="198"/>
    </location>
    <ligand>
        <name>xyloglucan</name>
        <dbReference type="ChEBI" id="CHEBI:18233"/>
    </ligand>
</feature>
<feature type="binding site" evidence="2">
    <location>
        <position position="274"/>
    </location>
    <ligand>
        <name>xyloglucan</name>
        <dbReference type="ChEBI" id="CHEBI:18233"/>
    </ligand>
</feature>
<feature type="site" description="Important for catalytic activity" evidence="2">
    <location>
        <position position="102"/>
    </location>
</feature>
<feature type="glycosylation site" description="N-linked (GlcNAc...) asparagine" evidence="3">
    <location>
        <position position="108"/>
    </location>
</feature>
<feature type="glycosylation site" description="N-linked (GlcNAc...) asparagine" evidence="3">
    <location>
        <position position="233"/>
    </location>
</feature>
<feature type="disulfide bond" evidence="2">
    <location>
        <begin position="222"/>
        <end position="231"/>
    </location>
</feature>
<feature type="disulfide bond" evidence="2">
    <location>
        <begin position="269"/>
        <end position="283"/>
    </location>
</feature>
<feature type="sequence conflict" description="In Ref. 4; AAL32550/AAM13251." evidence="7" ref="4">
    <original>K</original>
    <variation>E</variation>
    <location>
        <position position="76"/>
    </location>
</feature>